<comment type="function">
    <text evidence="1">Necessary for formate dehydrogenase activity.</text>
</comment>
<comment type="subcellular location">
    <subcellularLocation>
        <location evidence="1">Cytoplasm</location>
    </subcellularLocation>
</comment>
<comment type="similarity">
    <text evidence="1">Belongs to the FdhE family.</text>
</comment>
<dbReference type="EMBL" id="CP000247">
    <property type="protein sequence ID" value="ABG72061.1"/>
    <property type="molecule type" value="Genomic_DNA"/>
</dbReference>
<dbReference type="RefSeq" id="WP_000027720.1">
    <property type="nucleotide sequence ID" value="NC_008253.1"/>
</dbReference>
<dbReference type="SMR" id="Q0TAG8"/>
<dbReference type="KEGG" id="ecp:ECP_4103"/>
<dbReference type="HOGENOM" id="CLU_055275_0_0_6"/>
<dbReference type="Proteomes" id="UP000009182">
    <property type="component" value="Chromosome"/>
</dbReference>
<dbReference type="GO" id="GO:0005829">
    <property type="term" value="C:cytosol"/>
    <property type="evidence" value="ECO:0007669"/>
    <property type="project" value="TreeGrafter"/>
</dbReference>
<dbReference type="GO" id="GO:0008199">
    <property type="term" value="F:ferric iron binding"/>
    <property type="evidence" value="ECO:0007669"/>
    <property type="project" value="TreeGrafter"/>
</dbReference>
<dbReference type="GO" id="GO:0051604">
    <property type="term" value="P:protein maturation"/>
    <property type="evidence" value="ECO:0007669"/>
    <property type="project" value="TreeGrafter"/>
</dbReference>
<dbReference type="CDD" id="cd16341">
    <property type="entry name" value="FdhE"/>
    <property type="match status" value="1"/>
</dbReference>
<dbReference type="FunFam" id="3.90.1670.10:FF:000001">
    <property type="entry name" value="Protein FdhE"/>
    <property type="match status" value="1"/>
</dbReference>
<dbReference type="Gene3D" id="3.90.1670.10">
    <property type="entry name" value="FdhE-like domain"/>
    <property type="match status" value="1"/>
</dbReference>
<dbReference type="HAMAP" id="MF_00611">
    <property type="entry name" value="FdeH"/>
    <property type="match status" value="1"/>
</dbReference>
<dbReference type="InterPro" id="IPR024064">
    <property type="entry name" value="FdhE-like_sf"/>
</dbReference>
<dbReference type="InterPro" id="IPR056796">
    <property type="entry name" value="FdhE_C"/>
</dbReference>
<dbReference type="InterPro" id="IPR056797">
    <property type="entry name" value="FdhE_central"/>
</dbReference>
<dbReference type="InterPro" id="IPR056774">
    <property type="entry name" value="FdhE_N"/>
</dbReference>
<dbReference type="InterPro" id="IPR006452">
    <property type="entry name" value="Formate_DH_accessory"/>
</dbReference>
<dbReference type="NCBIfam" id="TIGR01562">
    <property type="entry name" value="FdhE"/>
    <property type="match status" value="1"/>
</dbReference>
<dbReference type="NCBIfam" id="NF002925">
    <property type="entry name" value="PRK03564.1"/>
    <property type="match status" value="1"/>
</dbReference>
<dbReference type="PANTHER" id="PTHR37689">
    <property type="entry name" value="PROTEIN FDHE"/>
    <property type="match status" value="1"/>
</dbReference>
<dbReference type="PANTHER" id="PTHR37689:SF1">
    <property type="entry name" value="PROTEIN FDHE"/>
    <property type="match status" value="1"/>
</dbReference>
<dbReference type="Pfam" id="PF24860">
    <property type="entry name" value="FdhE_C"/>
    <property type="match status" value="1"/>
</dbReference>
<dbReference type="Pfam" id="PF24859">
    <property type="entry name" value="FdhE_central"/>
    <property type="match status" value="1"/>
</dbReference>
<dbReference type="Pfam" id="PF04216">
    <property type="entry name" value="FdhE_N"/>
    <property type="match status" value="1"/>
</dbReference>
<dbReference type="PIRSF" id="PIRSF018296">
    <property type="entry name" value="Format_dh_formtn"/>
    <property type="match status" value="1"/>
</dbReference>
<dbReference type="SUPFAM" id="SSF144020">
    <property type="entry name" value="FdhE-like"/>
    <property type="match status" value="1"/>
</dbReference>
<name>FDHE_ECOL5</name>
<accession>Q0TAG8</accession>
<feature type="chain" id="PRO_1000056700" description="Protein FdhE">
    <location>
        <begin position="1"/>
        <end position="309"/>
    </location>
</feature>
<sequence length="309" mass="34719">MSIRIIPQDELGSSEKRTADMIPPLLFPRLKNLYNRRAERLRELAENNPLGDYLRFAALIAHAQEVVLYDHPLEMDLTTRIKEASAQGKPPLDIHVLPRDKHWQKLLMALIAELKPEMSGPALAVIENLEKASTQELEDMASALFASDFSSVSSDKAPFIWAALSLYWAQMANLIPGKARAEYGEQRQYCPVCGSMPVSSMVQIGTTQGLRYLHCNLCETEWHVVRVKCSNCEQSGKLHYWSLDDEQAAIKAESCDDCGTYLKILYQEKEPKVEAVADDLASLVLDARMEQEGYARSSINPFLFPGEGE</sequence>
<protein>
    <recommendedName>
        <fullName evidence="1">Protein FdhE</fullName>
    </recommendedName>
</protein>
<proteinExistence type="inferred from homology"/>
<organism>
    <name type="scientific">Escherichia coli O6:K15:H31 (strain 536 / UPEC)</name>
    <dbReference type="NCBI Taxonomy" id="362663"/>
    <lineage>
        <taxon>Bacteria</taxon>
        <taxon>Pseudomonadati</taxon>
        <taxon>Pseudomonadota</taxon>
        <taxon>Gammaproteobacteria</taxon>
        <taxon>Enterobacterales</taxon>
        <taxon>Enterobacteriaceae</taxon>
        <taxon>Escherichia</taxon>
    </lineage>
</organism>
<gene>
    <name evidence="1" type="primary">fdhE</name>
    <name type="ordered locus">ECP_4103</name>
</gene>
<evidence type="ECO:0000255" key="1">
    <source>
        <dbReference type="HAMAP-Rule" id="MF_00611"/>
    </source>
</evidence>
<keyword id="KW-0963">Cytoplasm</keyword>
<reference key="1">
    <citation type="journal article" date="2006" name="Mol. Microbiol.">
        <title>Role of pathogenicity island-associated integrases in the genome plasticity of uropathogenic Escherichia coli strain 536.</title>
        <authorList>
            <person name="Hochhut B."/>
            <person name="Wilde C."/>
            <person name="Balling G."/>
            <person name="Middendorf B."/>
            <person name="Dobrindt U."/>
            <person name="Brzuszkiewicz E."/>
            <person name="Gottschalk G."/>
            <person name="Carniel E."/>
            <person name="Hacker J."/>
        </authorList>
    </citation>
    <scope>NUCLEOTIDE SEQUENCE [LARGE SCALE GENOMIC DNA]</scope>
    <source>
        <strain>536 / UPEC</strain>
    </source>
</reference>